<protein>
    <recommendedName>
        <fullName evidence="2">Translation initiation factor IF-2</fullName>
    </recommendedName>
</protein>
<feature type="chain" id="PRO_0000228199" description="Translation initiation factor IF-2">
    <location>
        <begin position="1"/>
        <end position="709"/>
    </location>
</feature>
<feature type="domain" description="tr-type G">
    <location>
        <begin position="240"/>
        <end position="409"/>
    </location>
</feature>
<feature type="region of interest" description="Disordered" evidence="3">
    <location>
        <begin position="47"/>
        <end position="157"/>
    </location>
</feature>
<feature type="region of interest" description="G1" evidence="1">
    <location>
        <begin position="249"/>
        <end position="256"/>
    </location>
</feature>
<feature type="region of interest" description="G2" evidence="1">
    <location>
        <begin position="274"/>
        <end position="278"/>
    </location>
</feature>
<feature type="region of interest" description="G3" evidence="1">
    <location>
        <begin position="295"/>
        <end position="298"/>
    </location>
</feature>
<feature type="region of interest" description="G4" evidence="1">
    <location>
        <begin position="349"/>
        <end position="352"/>
    </location>
</feature>
<feature type="region of interest" description="G5" evidence="1">
    <location>
        <begin position="385"/>
        <end position="387"/>
    </location>
</feature>
<feature type="compositionally biased region" description="Basic and acidic residues" evidence="3">
    <location>
        <begin position="47"/>
        <end position="70"/>
    </location>
</feature>
<feature type="compositionally biased region" description="Basic and acidic residues" evidence="3">
    <location>
        <begin position="105"/>
        <end position="121"/>
    </location>
</feature>
<feature type="compositionally biased region" description="Basic residues" evidence="3">
    <location>
        <begin position="125"/>
        <end position="137"/>
    </location>
</feature>
<feature type="compositionally biased region" description="Low complexity" evidence="3">
    <location>
        <begin position="138"/>
        <end position="149"/>
    </location>
</feature>
<feature type="binding site" evidence="2">
    <location>
        <begin position="249"/>
        <end position="256"/>
    </location>
    <ligand>
        <name>GTP</name>
        <dbReference type="ChEBI" id="CHEBI:37565"/>
    </ligand>
</feature>
<feature type="binding site" evidence="2">
    <location>
        <begin position="295"/>
        <end position="299"/>
    </location>
    <ligand>
        <name>GTP</name>
        <dbReference type="ChEBI" id="CHEBI:37565"/>
    </ligand>
</feature>
<feature type="binding site" evidence="2">
    <location>
        <begin position="349"/>
        <end position="352"/>
    </location>
    <ligand>
        <name>GTP</name>
        <dbReference type="ChEBI" id="CHEBI:37565"/>
    </ligand>
</feature>
<sequence length="709" mass="78241">MSKMRVYEYAKKQNVPSKDVIHKLKEMNIEVNNHMAMLEADVVEKLDHQYRPNTGKKEEKKAEKKTEKPKRPTPAKAADFADEEIFDDSKEAAKMKPAKKKGAPKGKETKKTEAQQQEKKLLQAAKKKGKGPAKGKKQAAPAAKQAPQPAKKEKELPKKITFEGSLTVAELAKKLGREPSEIIKKLFMLGVMATINQDLDKDAIELICSDYGVEVEEKVTIDETNFEAIEIVDAPEDLVERPPVVTIMGHVDHGKTTLLDAIRHSKVTEQEAGGITQHIGAYQVTVNDKKITFLDTPGHEAFTTMRARGAQVTDIVILVVAADDGVMPQTVEAINHAKAANVPIIVAINKIDKPEANPDRVMQELMEYNLVPEEWGGDTIFCKLSAKTKEGLDHLLEMILLVSEMEELKANPNRRAVGTVIEAKLDKGRGPVATLLIQAGTLRVGDPIVVGTTYGRVRAMVNDSGRRVKEATPSMPVEITGLHEVPQAGDRFMVFEDEKKARQIAEARAQRQLQEQRSVKTRVSLDDLFEQIKQGEMKELNLIVKADVQGSVEALVAALQKIDVEGVRVKIIHAAVGAITESDISLATASNAIVIGFNVRPDANAKRAAESEKVDIRLHRIIYNVIEEIEAAMKGMLDPEYEEKVIGQAEVRQTFKVSKVGTIAGCYVTDGKITRDSKVRLIRQGIVVYEGEIDSLKRYKAIAPNGARV</sequence>
<keyword id="KW-0963">Cytoplasm</keyword>
<keyword id="KW-0342">GTP-binding</keyword>
<keyword id="KW-0396">Initiation factor</keyword>
<keyword id="KW-0547">Nucleotide-binding</keyword>
<keyword id="KW-0648">Protein biosynthesis</keyword>
<keyword id="KW-1185">Reference proteome</keyword>
<accession>Q5L0I8</accession>
<proteinExistence type="inferred from homology"/>
<gene>
    <name evidence="2" type="primary">infB</name>
    <name type="ordered locus">GK1263</name>
</gene>
<organism>
    <name type="scientific">Geobacillus kaustophilus (strain HTA426)</name>
    <dbReference type="NCBI Taxonomy" id="235909"/>
    <lineage>
        <taxon>Bacteria</taxon>
        <taxon>Bacillati</taxon>
        <taxon>Bacillota</taxon>
        <taxon>Bacilli</taxon>
        <taxon>Bacillales</taxon>
        <taxon>Anoxybacillaceae</taxon>
        <taxon>Geobacillus</taxon>
        <taxon>Geobacillus thermoleovorans group</taxon>
    </lineage>
</organism>
<dbReference type="EMBL" id="BA000043">
    <property type="protein sequence ID" value="BAD75548.1"/>
    <property type="molecule type" value="Genomic_DNA"/>
</dbReference>
<dbReference type="RefSeq" id="WP_011230763.1">
    <property type="nucleotide sequence ID" value="NC_006510.1"/>
</dbReference>
<dbReference type="BMRB" id="Q5L0I8"/>
<dbReference type="SMR" id="Q5L0I8"/>
<dbReference type="STRING" id="235909.GK1263"/>
<dbReference type="KEGG" id="gka:GK1263"/>
<dbReference type="PATRIC" id="fig|235909.7.peg.1363"/>
<dbReference type="eggNOG" id="COG0532">
    <property type="taxonomic scope" value="Bacteria"/>
</dbReference>
<dbReference type="HOGENOM" id="CLU_006301_5_1_9"/>
<dbReference type="Proteomes" id="UP000001172">
    <property type="component" value="Chromosome"/>
</dbReference>
<dbReference type="GO" id="GO:0005829">
    <property type="term" value="C:cytosol"/>
    <property type="evidence" value="ECO:0007669"/>
    <property type="project" value="TreeGrafter"/>
</dbReference>
<dbReference type="GO" id="GO:0005525">
    <property type="term" value="F:GTP binding"/>
    <property type="evidence" value="ECO:0007669"/>
    <property type="project" value="UniProtKB-KW"/>
</dbReference>
<dbReference type="GO" id="GO:0003924">
    <property type="term" value="F:GTPase activity"/>
    <property type="evidence" value="ECO:0007669"/>
    <property type="project" value="UniProtKB-UniRule"/>
</dbReference>
<dbReference type="GO" id="GO:0003743">
    <property type="term" value="F:translation initiation factor activity"/>
    <property type="evidence" value="ECO:0007669"/>
    <property type="project" value="UniProtKB-UniRule"/>
</dbReference>
<dbReference type="CDD" id="cd01887">
    <property type="entry name" value="IF2_eIF5B"/>
    <property type="match status" value="1"/>
</dbReference>
<dbReference type="CDD" id="cd03702">
    <property type="entry name" value="IF2_mtIF2_II"/>
    <property type="match status" value="1"/>
</dbReference>
<dbReference type="CDD" id="cd03692">
    <property type="entry name" value="mtIF2_IVc"/>
    <property type="match status" value="1"/>
</dbReference>
<dbReference type="FunFam" id="2.40.30.10:FF:000007">
    <property type="entry name" value="Translation initiation factor IF-2"/>
    <property type="match status" value="1"/>
</dbReference>
<dbReference type="FunFam" id="2.40.30.10:FF:000008">
    <property type="entry name" value="Translation initiation factor IF-2"/>
    <property type="match status" value="1"/>
</dbReference>
<dbReference type="FunFam" id="3.40.50.10050:FF:000001">
    <property type="entry name" value="Translation initiation factor IF-2"/>
    <property type="match status" value="1"/>
</dbReference>
<dbReference type="FunFam" id="3.40.50.300:FF:000019">
    <property type="entry name" value="Translation initiation factor IF-2"/>
    <property type="match status" value="1"/>
</dbReference>
<dbReference type="Gene3D" id="1.10.10.2480">
    <property type="match status" value="1"/>
</dbReference>
<dbReference type="Gene3D" id="3.40.50.300">
    <property type="entry name" value="P-loop containing nucleotide triphosphate hydrolases"/>
    <property type="match status" value="1"/>
</dbReference>
<dbReference type="Gene3D" id="2.40.30.10">
    <property type="entry name" value="Translation factors"/>
    <property type="match status" value="2"/>
</dbReference>
<dbReference type="Gene3D" id="3.40.50.10050">
    <property type="entry name" value="Translation initiation factor IF- 2, domain 3"/>
    <property type="match status" value="1"/>
</dbReference>
<dbReference type="HAMAP" id="MF_00100_B">
    <property type="entry name" value="IF_2_B"/>
    <property type="match status" value="1"/>
</dbReference>
<dbReference type="InterPro" id="IPR053905">
    <property type="entry name" value="EF-G-like_DII"/>
</dbReference>
<dbReference type="InterPro" id="IPR044145">
    <property type="entry name" value="IF2_II"/>
</dbReference>
<dbReference type="InterPro" id="IPR006847">
    <property type="entry name" value="IF2_N"/>
</dbReference>
<dbReference type="InterPro" id="IPR027417">
    <property type="entry name" value="P-loop_NTPase"/>
</dbReference>
<dbReference type="InterPro" id="IPR005225">
    <property type="entry name" value="Small_GTP-bd"/>
</dbReference>
<dbReference type="InterPro" id="IPR000795">
    <property type="entry name" value="T_Tr_GTP-bd_dom"/>
</dbReference>
<dbReference type="InterPro" id="IPR000178">
    <property type="entry name" value="TF_IF2_bacterial-like"/>
</dbReference>
<dbReference type="InterPro" id="IPR015760">
    <property type="entry name" value="TIF_IF2"/>
</dbReference>
<dbReference type="InterPro" id="IPR023115">
    <property type="entry name" value="TIF_IF2_dom3"/>
</dbReference>
<dbReference type="InterPro" id="IPR036925">
    <property type="entry name" value="TIF_IF2_dom3_sf"/>
</dbReference>
<dbReference type="InterPro" id="IPR009000">
    <property type="entry name" value="Transl_B-barrel_sf"/>
</dbReference>
<dbReference type="NCBIfam" id="TIGR00487">
    <property type="entry name" value="IF-2"/>
    <property type="match status" value="1"/>
</dbReference>
<dbReference type="NCBIfam" id="TIGR00231">
    <property type="entry name" value="small_GTP"/>
    <property type="match status" value="1"/>
</dbReference>
<dbReference type="PANTHER" id="PTHR43381:SF5">
    <property type="entry name" value="TR-TYPE G DOMAIN-CONTAINING PROTEIN"/>
    <property type="match status" value="1"/>
</dbReference>
<dbReference type="PANTHER" id="PTHR43381">
    <property type="entry name" value="TRANSLATION INITIATION FACTOR IF-2-RELATED"/>
    <property type="match status" value="1"/>
</dbReference>
<dbReference type="Pfam" id="PF22042">
    <property type="entry name" value="EF-G_D2"/>
    <property type="match status" value="1"/>
</dbReference>
<dbReference type="Pfam" id="PF00009">
    <property type="entry name" value="GTP_EFTU"/>
    <property type="match status" value="1"/>
</dbReference>
<dbReference type="Pfam" id="PF11987">
    <property type="entry name" value="IF-2"/>
    <property type="match status" value="1"/>
</dbReference>
<dbReference type="Pfam" id="PF04760">
    <property type="entry name" value="IF2_N"/>
    <property type="match status" value="2"/>
</dbReference>
<dbReference type="SUPFAM" id="SSF52156">
    <property type="entry name" value="Initiation factor IF2/eIF5b, domain 3"/>
    <property type="match status" value="1"/>
</dbReference>
<dbReference type="SUPFAM" id="SSF52540">
    <property type="entry name" value="P-loop containing nucleoside triphosphate hydrolases"/>
    <property type="match status" value="1"/>
</dbReference>
<dbReference type="SUPFAM" id="SSF50447">
    <property type="entry name" value="Translation proteins"/>
    <property type="match status" value="2"/>
</dbReference>
<dbReference type="PROSITE" id="PS51722">
    <property type="entry name" value="G_TR_2"/>
    <property type="match status" value="1"/>
</dbReference>
<evidence type="ECO:0000250" key="1"/>
<evidence type="ECO:0000255" key="2">
    <source>
        <dbReference type="HAMAP-Rule" id="MF_00100"/>
    </source>
</evidence>
<evidence type="ECO:0000256" key="3">
    <source>
        <dbReference type="SAM" id="MobiDB-lite"/>
    </source>
</evidence>
<name>IF2_GEOKA</name>
<comment type="function">
    <text evidence="2">One of the essential components for the initiation of protein synthesis. Protects formylmethionyl-tRNA from spontaneous hydrolysis and promotes its binding to the 30S ribosomal subunits. Also involved in the hydrolysis of GTP during the formation of the 70S ribosomal complex.</text>
</comment>
<comment type="subcellular location">
    <subcellularLocation>
        <location evidence="2">Cytoplasm</location>
    </subcellularLocation>
</comment>
<comment type="similarity">
    <text evidence="2">Belongs to the TRAFAC class translation factor GTPase superfamily. Classic translation factor GTPase family. IF-2 subfamily.</text>
</comment>
<reference key="1">
    <citation type="journal article" date="2004" name="Nucleic Acids Res.">
        <title>Thermoadaptation trait revealed by the genome sequence of thermophilic Geobacillus kaustophilus.</title>
        <authorList>
            <person name="Takami H."/>
            <person name="Takaki Y."/>
            <person name="Chee G.-J."/>
            <person name="Nishi S."/>
            <person name="Shimamura S."/>
            <person name="Suzuki H."/>
            <person name="Matsui S."/>
            <person name="Uchiyama I."/>
        </authorList>
    </citation>
    <scope>NUCLEOTIDE SEQUENCE [LARGE SCALE GENOMIC DNA]</scope>
    <source>
        <strain>HTA426</strain>
    </source>
</reference>